<feature type="chain" id="PRO_0000076526" description="AP-1-like transcription factor YAP6">
    <location>
        <begin position="1"/>
        <end position="383"/>
    </location>
</feature>
<feature type="domain" description="bZIP">
    <location>
        <begin position="221"/>
        <end position="284"/>
    </location>
</feature>
<feature type="region of interest" description="Disordered" evidence="2">
    <location>
        <begin position="1"/>
        <end position="64"/>
    </location>
</feature>
<feature type="region of interest" description="Disordered" evidence="2">
    <location>
        <begin position="83"/>
        <end position="113"/>
    </location>
</feature>
<feature type="region of interest" description="Disordered" evidence="2">
    <location>
        <begin position="168"/>
        <end position="239"/>
    </location>
</feature>
<feature type="region of interest" description="Basic motif" evidence="1">
    <location>
        <begin position="223"/>
        <end position="247"/>
    </location>
</feature>
<feature type="region of interest" description="Leucine-zipper" evidence="1">
    <location>
        <begin position="249"/>
        <end position="277"/>
    </location>
</feature>
<feature type="compositionally biased region" description="Polar residues" evidence="2">
    <location>
        <begin position="13"/>
        <end position="64"/>
    </location>
</feature>
<feature type="compositionally biased region" description="Low complexity" evidence="2">
    <location>
        <begin position="88"/>
        <end position="101"/>
    </location>
</feature>
<feature type="compositionally biased region" description="Polar residues" evidence="2">
    <location>
        <begin position="168"/>
        <end position="184"/>
    </location>
</feature>
<feature type="compositionally biased region" description="Low complexity" evidence="2">
    <location>
        <begin position="185"/>
        <end position="206"/>
    </location>
</feature>
<feature type="compositionally biased region" description="Polar residues" evidence="2">
    <location>
        <begin position="213"/>
        <end position="222"/>
    </location>
</feature>
<feature type="compositionally biased region" description="Low complexity" evidence="2">
    <location>
        <begin position="227"/>
        <end position="237"/>
    </location>
</feature>
<comment type="function">
    <text evidence="3 4 5 7 8">Transcription activator involved in the regulation of genes expressed in response to environmental changes and metabolic requirements. According to genome-wide promoter binding and gene expression studies it regulates, among others, genes involved in ribosome biogenesis, protein synthesis, carbohydrate metabolism, and carbohydrate transport. It may also be involved in pleiotropic drug resistance. When overexpressed, it confers resistance to cisplatin, methylmethanosulfonate, and mitomycin C, and increases cellular tolerance to sodium and lithium.</text>
</comment>
<comment type="subunit">
    <text evidence="1">Homodimer.</text>
</comment>
<comment type="subcellular location">
    <subcellularLocation>
        <location evidence="3">Nucleus</location>
    </subcellularLocation>
</comment>
<comment type="induction">
    <text>Seems to activate its own expression and that of the repressor ROX1 which in turn represses YAP6 expression.</text>
</comment>
<comment type="miscellaneous">
    <text>One of 8 closely related fungi-specific YAP proteins (YAP1 to YAP8), which all seem to be transcription activators of the environmental stress response and metabolism control pathways and to have similar but not identical DNA binding specificities.</text>
</comment>
<comment type="miscellaneous">
    <text evidence="6">Present with 1400 molecules/cell in log phase SD medium.</text>
</comment>
<comment type="similarity">
    <text evidence="9">Belongs to the bZIP family. YAP subfamily.</text>
</comment>
<comment type="sequence caution" evidence="9">
    <conflict type="frameshift">
        <sequence resource="EMBL-CDS" id="CAA92717"/>
    </conflict>
</comment>
<sequence length="383" mass="43597">MQNPPLIRPDMYNQGSSSMATYNASEKNLNEHPSPQIAQPSTSQKLPYRINPTTTNGDTDISVNSNPIQPPLPNLMHLSGPSDYRSMHQSPIHPSYIIPPHSNERKQSASYNRPQNAHVSIQPSVVFPPKSYSISYAPYQINPPLPNGLPNQSISLNKEYIAEEQLSTLPSRNTSVTTAPPSFQNSADTAKNSADNNDNNDNVTKPVPDKDTQLISSSGKTLRNTRRAAQNRTAQKAFRQRKEKYIKNLEQKSKIFDDLLAENNNFKSLNDSLRNDNNILIAQHEAIRNAITMLRSEYDVLCNENNMLKNENSIIKNEHNMSRNENENLKLENKRFHAEYIRMIEDIENTKRKEQEQRDEIEQLKKKIRSLEEIVGRHSDSAT</sequence>
<evidence type="ECO:0000250" key="1"/>
<evidence type="ECO:0000256" key="2">
    <source>
        <dbReference type="SAM" id="MobiDB-lite"/>
    </source>
</evidence>
<evidence type="ECO:0000269" key="3">
    <source>
    </source>
</evidence>
<evidence type="ECO:0000269" key="4">
    <source>
    </source>
</evidence>
<evidence type="ECO:0000269" key="5">
    <source>
    </source>
</evidence>
<evidence type="ECO:0000269" key="6">
    <source>
    </source>
</evidence>
<evidence type="ECO:0000269" key="7">
    <source>
    </source>
</evidence>
<evidence type="ECO:0000269" key="8">
    <source>
    </source>
</evidence>
<evidence type="ECO:0000305" key="9"/>
<proteinExistence type="evidence at protein level"/>
<keyword id="KW-0010">Activator</keyword>
<keyword id="KW-0238">DNA-binding</keyword>
<keyword id="KW-0539">Nucleus</keyword>
<keyword id="KW-1185">Reference proteome</keyword>
<keyword id="KW-0804">Transcription</keyword>
<keyword id="KW-0805">Transcription regulation</keyword>
<accession>Q03935</accession>
<accession>D6VSN9</accession>
<accession>Q03926</accession>
<accession>Q03931</accession>
<reference key="1">
    <citation type="journal article" date="1997" name="Nature">
        <title>The nucleotide sequence of Saccharomyces cerevisiae chromosome IV.</title>
        <authorList>
            <person name="Jacq C."/>
            <person name="Alt-Moerbe J."/>
            <person name="Andre B."/>
            <person name="Arnold W."/>
            <person name="Bahr A."/>
            <person name="Ballesta J.P.G."/>
            <person name="Bargues M."/>
            <person name="Baron L."/>
            <person name="Becker A."/>
            <person name="Biteau N."/>
            <person name="Bloecker H."/>
            <person name="Blugeon C."/>
            <person name="Boskovic J."/>
            <person name="Brandt P."/>
            <person name="Brueckner M."/>
            <person name="Buitrago M.J."/>
            <person name="Coster F."/>
            <person name="Delaveau T."/>
            <person name="del Rey F."/>
            <person name="Dujon B."/>
            <person name="Eide L.G."/>
            <person name="Garcia-Cantalejo J.M."/>
            <person name="Goffeau A."/>
            <person name="Gomez-Peris A."/>
            <person name="Granotier C."/>
            <person name="Hanemann V."/>
            <person name="Hankeln T."/>
            <person name="Hoheisel J.D."/>
            <person name="Jaeger W."/>
            <person name="Jimenez A."/>
            <person name="Jonniaux J.-L."/>
            <person name="Kraemer C."/>
            <person name="Kuester H."/>
            <person name="Laamanen P."/>
            <person name="Legros Y."/>
            <person name="Louis E.J."/>
            <person name="Moeller-Rieker S."/>
            <person name="Monnet A."/>
            <person name="Moro M."/>
            <person name="Mueller-Auer S."/>
            <person name="Nussbaumer B."/>
            <person name="Paricio N."/>
            <person name="Paulin L."/>
            <person name="Perea J."/>
            <person name="Perez-Alonso M."/>
            <person name="Perez-Ortin J.E."/>
            <person name="Pohl T.M."/>
            <person name="Prydz H."/>
            <person name="Purnelle B."/>
            <person name="Rasmussen S.W."/>
            <person name="Remacha M.A."/>
            <person name="Revuelta J.L."/>
            <person name="Rieger M."/>
            <person name="Salom D."/>
            <person name="Saluz H.P."/>
            <person name="Saiz J.E."/>
            <person name="Saren A.-M."/>
            <person name="Schaefer M."/>
            <person name="Scharfe M."/>
            <person name="Schmidt E.R."/>
            <person name="Schneider C."/>
            <person name="Scholler P."/>
            <person name="Schwarz S."/>
            <person name="Soler-Mira A."/>
            <person name="Urrestarazu L.A."/>
            <person name="Verhasselt P."/>
            <person name="Vissers S."/>
            <person name="Voet M."/>
            <person name="Volckaert G."/>
            <person name="Wagner G."/>
            <person name="Wambutt R."/>
            <person name="Wedler E."/>
            <person name="Wedler H."/>
            <person name="Woelfl S."/>
            <person name="Harris D.E."/>
            <person name="Bowman S."/>
            <person name="Brown D."/>
            <person name="Churcher C.M."/>
            <person name="Connor R."/>
            <person name="Dedman K."/>
            <person name="Gentles S."/>
            <person name="Hamlin N."/>
            <person name="Hunt S."/>
            <person name="Jones L."/>
            <person name="McDonald S."/>
            <person name="Murphy L.D."/>
            <person name="Niblett D."/>
            <person name="Odell C."/>
            <person name="Oliver K."/>
            <person name="Rajandream M.A."/>
            <person name="Richards C."/>
            <person name="Shore L."/>
            <person name="Walsh S.V."/>
            <person name="Barrell B.G."/>
            <person name="Dietrich F.S."/>
            <person name="Mulligan J.T."/>
            <person name="Allen E."/>
            <person name="Araujo R."/>
            <person name="Aviles E."/>
            <person name="Berno A."/>
            <person name="Carpenter J."/>
            <person name="Chen E."/>
            <person name="Cherry J.M."/>
            <person name="Chung E."/>
            <person name="Duncan M."/>
            <person name="Hunicke-Smith S."/>
            <person name="Hyman R.W."/>
            <person name="Komp C."/>
            <person name="Lashkari D."/>
            <person name="Lew H."/>
            <person name="Lin D."/>
            <person name="Mosedale D."/>
            <person name="Nakahara K."/>
            <person name="Namath A."/>
            <person name="Oefner P."/>
            <person name="Oh C."/>
            <person name="Petel F.X."/>
            <person name="Roberts D."/>
            <person name="Schramm S."/>
            <person name="Schroeder M."/>
            <person name="Shogren T."/>
            <person name="Shroff N."/>
            <person name="Winant A."/>
            <person name="Yelton M.A."/>
            <person name="Botstein D."/>
            <person name="Davis R.W."/>
            <person name="Johnston M."/>
            <person name="Andrews S."/>
            <person name="Brinkman R."/>
            <person name="Cooper J."/>
            <person name="Ding H."/>
            <person name="Du Z."/>
            <person name="Favello A."/>
            <person name="Fulton L."/>
            <person name="Gattung S."/>
            <person name="Greco T."/>
            <person name="Hallsworth K."/>
            <person name="Hawkins J."/>
            <person name="Hillier L.W."/>
            <person name="Jier M."/>
            <person name="Johnson D."/>
            <person name="Johnston L."/>
            <person name="Kirsten J."/>
            <person name="Kucaba T."/>
            <person name="Langston Y."/>
            <person name="Latreille P."/>
            <person name="Le T."/>
            <person name="Mardis E."/>
            <person name="Menezes S."/>
            <person name="Miller N."/>
            <person name="Nhan M."/>
            <person name="Pauley A."/>
            <person name="Peluso D."/>
            <person name="Rifkin L."/>
            <person name="Riles L."/>
            <person name="Taich A."/>
            <person name="Trevaskis E."/>
            <person name="Vignati D."/>
            <person name="Wilcox L."/>
            <person name="Wohldman P."/>
            <person name="Vaudin M."/>
            <person name="Wilson R."/>
            <person name="Waterston R."/>
            <person name="Albermann K."/>
            <person name="Hani J."/>
            <person name="Heumann K."/>
            <person name="Kleine K."/>
            <person name="Mewes H.-W."/>
            <person name="Zollner A."/>
            <person name="Zaccaria P."/>
        </authorList>
    </citation>
    <scope>NUCLEOTIDE SEQUENCE [LARGE SCALE GENOMIC DNA]</scope>
    <source>
        <strain>ATCC 204508 / S288c</strain>
    </source>
</reference>
<reference key="2">
    <citation type="journal article" date="2014" name="G3 (Bethesda)">
        <title>The reference genome sequence of Saccharomyces cerevisiae: Then and now.</title>
        <authorList>
            <person name="Engel S.R."/>
            <person name="Dietrich F.S."/>
            <person name="Fisk D.G."/>
            <person name="Binkley G."/>
            <person name="Balakrishnan R."/>
            <person name="Costanzo M.C."/>
            <person name="Dwight S.S."/>
            <person name="Hitz B.C."/>
            <person name="Karra K."/>
            <person name="Nash R.S."/>
            <person name="Weng S."/>
            <person name="Wong E.D."/>
            <person name="Lloyd P."/>
            <person name="Skrzypek M.S."/>
            <person name="Miyasato S.R."/>
            <person name="Simison M."/>
            <person name="Cherry J.M."/>
        </authorList>
    </citation>
    <scope>GENOME REANNOTATION</scope>
    <source>
        <strain>ATCC 204508 / S288c</strain>
    </source>
</reference>
<reference key="3">
    <citation type="journal article" date="2007" name="Genome Res.">
        <title>Approaching a complete repository of sequence-verified protein-encoding clones for Saccharomyces cerevisiae.</title>
        <authorList>
            <person name="Hu Y."/>
            <person name="Rolfs A."/>
            <person name="Bhullar B."/>
            <person name="Murthy T.V.S."/>
            <person name="Zhu C."/>
            <person name="Berger M.F."/>
            <person name="Camargo A.A."/>
            <person name="Kelley F."/>
            <person name="McCarron S."/>
            <person name="Jepson D."/>
            <person name="Richardson A."/>
            <person name="Raphael J."/>
            <person name="Moreira D."/>
            <person name="Taycher E."/>
            <person name="Zuo D."/>
            <person name="Mohr S."/>
            <person name="Kane M.F."/>
            <person name="Williamson J."/>
            <person name="Simpson A.J.G."/>
            <person name="Bulyk M.L."/>
            <person name="Harlow E."/>
            <person name="Marsischky G."/>
            <person name="Kolodner R.D."/>
            <person name="LaBaer J."/>
        </authorList>
    </citation>
    <scope>NUCLEOTIDE SEQUENCE [GENOMIC DNA]</scope>
    <source>
        <strain>ATCC 204508 / S288c</strain>
    </source>
</reference>
<reference key="4">
    <citation type="journal article" date="1997" name="Mol. Cell. Biol.">
        <title>Yap, a novel family of eight bZIP proteins in Saccharomyces cerevisiae with distinct biological functions.</title>
        <authorList>
            <person name="Fernandes L."/>
            <person name="Rodrigues-Pousada C."/>
            <person name="Struhl K."/>
        </authorList>
    </citation>
    <scope>FUNCTION</scope>
    <scope>ISOLATION OF YAP FAMILY PROTEINS</scope>
</reference>
<reference key="5">
    <citation type="journal article" date="1998" name="FEBS Lett.">
        <title>Yeast putative transcription factors involved in salt tolerance.</title>
        <authorList>
            <person name="Mendizabal I."/>
            <person name="Rios G."/>
            <person name="Mulet J.M."/>
            <person name="Serrano R."/>
            <person name="de Larrinoa I.F."/>
        </authorList>
    </citation>
    <scope>FUNCTION</scope>
    <scope>SALT TOLERANCE</scope>
</reference>
<reference key="6">
    <citation type="journal article" date="2001" name="Mol. Pharmacol.">
        <title>Two nuclear proteins, Cin5 and Ydr259c, confer resistance to cisplatin in Saccharomyces cerevisiae.</title>
        <authorList>
            <person name="Furuchi T."/>
            <person name="Ishikawa H."/>
            <person name="Miura N."/>
            <person name="Ishizuka M."/>
            <person name="Kajiya K."/>
            <person name="Kuge S."/>
            <person name="Naganuma A."/>
        </authorList>
    </citation>
    <scope>FUNCTION</scope>
    <scope>SUBCELLULAR LOCATION</scope>
    <scope>PLEIOTROPIC DRUG-RESISTANCE</scope>
</reference>
<reference key="7">
    <citation type="journal article" date="2002" name="Science">
        <title>Transcriptional regulatory networks in Saccharomyces cerevisiae.</title>
        <authorList>
            <person name="Lee T.I."/>
            <person name="Rinaldi N.J."/>
            <person name="Robert F."/>
            <person name="Odom D.T."/>
            <person name="Bar-Joseph Z."/>
            <person name="Gerber G.K."/>
            <person name="Hannett N.M."/>
            <person name="Harbison C.T."/>
            <person name="Thompson C.M."/>
            <person name="Simon I."/>
            <person name="Zeitlinger J."/>
            <person name="Jennings E.G."/>
            <person name="Murray H.L."/>
            <person name="Gordon D.B."/>
            <person name="Ren B."/>
            <person name="Wyrick J.J."/>
            <person name="Tagne J.B."/>
            <person name="Volkert T.L."/>
            <person name="Fraenkel E."/>
            <person name="Gifford D.K."/>
            <person name="Young R.A."/>
        </authorList>
    </citation>
    <scope>FUNCTION</scope>
    <scope>IDENTIFICATION OF TARGET PROMOTERS</scope>
</reference>
<reference key="8">
    <citation type="journal article" date="2003" name="Nat. Biotechnol.">
        <title>Computational discovery of gene modules and regulatory networks.</title>
        <authorList>
            <person name="Bar-Joseph Z."/>
            <person name="Gerber G.K."/>
            <person name="Lee T.I."/>
            <person name="Rinaldi N.J."/>
            <person name="Yoo J.Y."/>
            <person name="Robert F."/>
            <person name="Gordon D.B."/>
            <person name="Fraenkel E."/>
            <person name="Jaakkola T.S."/>
            <person name="Young R.A."/>
            <person name="Gifford D.K."/>
        </authorList>
    </citation>
    <scope>FUNCTION</scope>
    <scope>REGULATORY TRANSCRIPTION MODULES</scope>
</reference>
<reference key="9">
    <citation type="journal article" date="2003" name="Nature">
        <title>Global analysis of protein expression in yeast.</title>
        <authorList>
            <person name="Ghaemmaghami S."/>
            <person name="Huh W.-K."/>
            <person name="Bower K."/>
            <person name="Howson R.W."/>
            <person name="Belle A."/>
            <person name="Dephoure N."/>
            <person name="O'Shea E.K."/>
            <person name="Weissman J.S."/>
        </authorList>
    </citation>
    <scope>LEVEL OF PROTEIN EXPRESSION [LARGE SCALE ANALYSIS]</scope>
</reference>
<protein>
    <recommendedName>
        <fullName>AP-1-like transcription factor YAP6</fullName>
    </recommendedName>
</protein>
<organism>
    <name type="scientific">Saccharomyces cerevisiae (strain ATCC 204508 / S288c)</name>
    <name type="common">Baker's yeast</name>
    <dbReference type="NCBI Taxonomy" id="559292"/>
    <lineage>
        <taxon>Eukaryota</taxon>
        <taxon>Fungi</taxon>
        <taxon>Dikarya</taxon>
        <taxon>Ascomycota</taxon>
        <taxon>Saccharomycotina</taxon>
        <taxon>Saccharomycetes</taxon>
        <taxon>Saccharomycetales</taxon>
        <taxon>Saccharomycetaceae</taxon>
        <taxon>Saccharomyces</taxon>
    </lineage>
</organism>
<name>YAP6_YEAST</name>
<gene>
    <name type="primary">YAP6</name>
    <name type="synonym">HAL7</name>
    <name type="ordered locus">YDR259C</name>
    <name type="ORF">YD9320A.09C</name>
    <name type="ORF">YD9320A.10C</name>
</gene>
<dbReference type="EMBL" id="Z70202">
    <property type="protein sequence ID" value="CAA94098.1"/>
    <property type="molecule type" value="Genomic_DNA"/>
</dbReference>
<dbReference type="EMBL" id="Z68329">
    <property type="protein sequence ID" value="CAA92716.1"/>
    <property type="molecule type" value="Genomic_DNA"/>
</dbReference>
<dbReference type="EMBL" id="Z68329">
    <property type="protein sequence ID" value="CAA92717.1"/>
    <property type="status" value="ALT_FRAME"/>
    <property type="molecule type" value="Genomic_DNA"/>
</dbReference>
<dbReference type="EMBL" id="AY557790">
    <property type="protein sequence ID" value="AAS56116.1"/>
    <property type="molecule type" value="Genomic_DNA"/>
</dbReference>
<dbReference type="EMBL" id="BK006938">
    <property type="protein sequence ID" value="DAA12099.1"/>
    <property type="molecule type" value="Genomic_DNA"/>
</dbReference>
<dbReference type="PIR" id="S67462">
    <property type="entry name" value="S67462"/>
</dbReference>
<dbReference type="RefSeq" id="NP_010545.3">
    <property type="nucleotide sequence ID" value="NM_001180567.3"/>
</dbReference>
<dbReference type="SMR" id="Q03935"/>
<dbReference type="BioGRID" id="32309">
    <property type="interactions" value="88"/>
</dbReference>
<dbReference type="DIP" id="DIP-4253N"/>
<dbReference type="FunCoup" id="Q03935">
    <property type="interactions" value="1085"/>
</dbReference>
<dbReference type="IntAct" id="Q03935">
    <property type="interactions" value="14"/>
</dbReference>
<dbReference type="MINT" id="Q03935"/>
<dbReference type="STRING" id="4932.YDR259C"/>
<dbReference type="GlyGen" id="Q03935">
    <property type="glycosylation" value="1 site, 1 O-linked glycan (1 site)"/>
</dbReference>
<dbReference type="iPTMnet" id="Q03935"/>
<dbReference type="PaxDb" id="4932-YDR259C"/>
<dbReference type="PeptideAtlas" id="Q03935"/>
<dbReference type="EnsemblFungi" id="YDR259C_mRNA">
    <property type="protein sequence ID" value="YDR259C"/>
    <property type="gene ID" value="YDR259C"/>
</dbReference>
<dbReference type="GeneID" id="851846"/>
<dbReference type="KEGG" id="sce:YDR259C"/>
<dbReference type="AGR" id="SGD:S000002667"/>
<dbReference type="SGD" id="S000002667">
    <property type="gene designation" value="YAP6"/>
</dbReference>
<dbReference type="VEuPathDB" id="FungiDB:YDR259C"/>
<dbReference type="eggNOG" id="ENOG502SC5V">
    <property type="taxonomic scope" value="Eukaryota"/>
</dbReference>
<dbReference type="GeneTree" id="ENSGT00940000176707"/>
<dbReference type="HOGENOM" id="CLU_077201_0_0_1"/>
<dbReference type="InParanoid" id="Q03935"/>
<dbReference type="OMA" id="CNENNML"/>
<dbReference type="OrthoDB" id="4061287at2759"/>
<dbReference type="BioCyc" id="YEAST:G3O-29830-MONOMER"/>
<dbReference type="BioGRID-ORCS" id="851846">
    <property type="hits" value="0 hits in 13 CRISPR screens"/>
</dbReference>
<dbReference type="PRO" id="PR:Q03935"/>
<dbReference type="Proteomes" id="UP000002311">
    <property type="component" value="Chromosome IV"/>
</dbReference>
<dbReference type="RNAct" id="Q03935">
    <property type="molecule type" value="protein"/>
</dbReference>
<dbReference type="GO" id="GO:0005634">
    <property type="term" value="C:nucleus"/>
    <property type="evidence" value="ECO:0000314"/>
    <property type="project" value="SGD"/>
</dbReference>
<dbReference type="GO" id="GO:0000981">
    <property type="term" value="F:DNA-binding transcription factor activity, RNA polymerase II-specific"/>
    <property type="evidence" value="ECO:0000314"/>
    <property type="project" value="SGD"/>
</dbReference>
<dbReference type="GO" id="GO:0001010">
    <property type="term" value="F:RNA polymerase II sequence-specific DNA-binding transcription factor recruiting activity"/>
    <property type="evidence" value="ECO:0000353"/>
    <property type="project" value="SGD"/>
</dbReference>
<dbReference type="GO" id="GO:0043565">
    <property type="term" value="F:sequence-specific DNA binding"/>
    <property type="evidence" value="ECO:0007005"/>
    <property type="project" value="SGD"/>
</dbReference>
<dbReference type="GO" id="GO:0000976">
    <property type="term" value="F:transcription cis-regulatory region binding"/>
    <property type="evidence" value="ECO:0007669"/>
    <property type="project" value="InterPro"/>
</dbReference>
<dbReference type="GO" id="GO:0000122">
    <property type="term" value="P:negative regulation of transcription by RNA polymerase II"/>
    <property type="evidence" value="ECO:0000315"/>
    <property type="project" value="SGD"/>
</dbReference>
<dbReference type="GO" id="GO:0045944">
    <property type="term" value="P:positive regulation of transcription by RNA polymerase II"/>
    <property type="evidence" value="ECO:0000315"/>
    <property type="project" value="SGD"/>
</dbReference>
<dbReference type="CDD" id="cd14688">
    <property type="entry name" value="bZIP_YAP"/>
    <property type="match status" value="1"/>
</dbReference>
<dbReference type="FunFam" id="1.20.5.170:FF:000105">
    <property type="entry name" value="AP-1-like transcription factor YAP4"/>
    <property type="match status" value="1"/>
</dbReference>
<dbReference type="Gene3D" id="1.20.5.170">
    <property type="match status" value="1"/>
</dbReference>
<dbReference type="InterPro" id="IPR050936">
    <property type="entry name" value="AP-1-like"/>
</dbReference>
<dbReference type="InterPro" id="IPR004827">
    <property type="entry name" value="bZIP"/>
</dbReference>
<dbReference type="InterPro" id="IPR046347">
    <property type="entry name" value="bZIP_sf"/>
</dbReference>
<dbReference type="PANTHER" id="PTHR40621:SF6">
    <property type="entry name" value="AP-1-LIKE TRANSCRIPTION FACTOR YAP1-RELATED"/>
    <property type="match status" value="1"/>
</dbReference>
<dbReference type="PANTHER" id="PTHR40621">
    <property type="entry name" value="TRANSCRIPTION FACTOR KAPC-RELATED"/>
    <property type="match status" value="1"/>
</dbReference>
<dbReference type="Pfam" id="PF00170">
    <property type="entry name" value="bZIP_1"/>
    <property type="match status" value="1"/>
</dbReference>
<dbReference type="SMART" id="SM00338">
    <property type="entry name" value="BRLZ"/>
    <property type="match status" value="1"/>
</dbReference>
<dbReference type="SUPFAM" id="SSF57959">
    <property type="entry name" value="Leucine zipper domain"/>
    <property type="match status" value="1"/>
</dbReference>
<dbReference type="PROSITE" id="PS00036">
    <property type="entry name" value="BZIP_BASIC"/>
    <property type="match status" value="1"/>
</dbReference>